<proteinExistence type="inferred from homology"/>
<gene>
    <name evidence="1" type="primary">dinG</name>
    <name type="ordered locus">SH1457</name>
</gene>
<evidence type="ECO:0000255" key="1">
    <source>
        <dbReference type="HAMAP-Rule" id="MF_02206"/>
    </source>
</evidence>
<feature type="chain" id="PRO_0000277602" description="3'-5' exonuclease DinG">
    <location>
        <begin position="1"/>
        <end position="900"/>
    </location>
</feature>
<feature type="domain" description="Exonuclease" evidence="1">
    <location>
        <begin position="8"/>
        <end position="161"/>
    </location>
</feature>
<feature type="domain" description="Helicase ATP-binding" evidence="1">
    <location>
        <begin position="241"/>
        <end position="496"/>
    </location>
</feature>
<feature type="domain" description="Helicase C-terminal" evidence="1">
    <location>
        <begin position="713"/>
        <end position="893"/>
    </location>
</feature>
<feature type="short sequence motif" description="DEAH box" evidence="1">
    <location>
        <begin position="448"/>
        <end position="451"/>
    </location>
</feature>
<feature type="binding site" evidence="1">
    <location>
        <begin position="276"/>
        <end position="283"/>
    </location>
    <ligand>
        <name>ATP</name>
        <dbReference type="ChEBI" id="CHEBI:30616"/>
    </ligand>
</feature>
<name>DING_STAHJ</name>
<keyword id="KW-0067">ATP-binding</keyword>
<keyword id="KW-0269">Exonuclease</keyword>
<keyword id="KW-0378">Hydrolase</keyword>
<keyword id="KW-0540">Nuclease</keyword>
<keyword id="KW-0547">Nucleotide-binding</keyword>
<protein>
    <recommendedName>
        <fullName evidence="1">3'-5' exonuclease DinG</fullName>
        <ecNumber evidence="1">3.1.-.-</ecNumber>
    </recommendedName>
</protein>
<sequence>MGHTSYAVVDLETTGNQLDYDEIIQIGITFVSNNKISGTYHSMIRTDLDIPPFIQALTSIEDTMLEQAPYFHEIAQEIYKQLKDRVFVAHNVDFDLNFIKKAFQNCNIDFKPKKVLDTLELFKIAYPTDKSYQLSELAEAHDIPLDNAHRADEDATTTALLMIKAFQKFEQLPIDTLKQLYYLSKNLKYDLFNVLFEMVRQHENSPLDNQYGQFEQIIYKKQIDLKAPKTSFNGSLKDLYSEVVKSLNLTYRPQQLYLSEIILEQLMHNDKAMIEAPLGSGKSLAYLLAALMYNIETGRHVMISTNTKLLQNQLLLKDIPSINQALNFKINATLIKSKSEYISLGLISQILKDETTNYEVNILKMQLLTWIIETETGDIQDLNLKGGQKMYFDQKIETYVPVRHDMHYYNYIKRNAHHIQIGITNHAHLIHSDQENSIYQLFDDCIIDEAHRLPDYALNQVTNDLDYSDLKYQLGLIGKNENEKLLKAIDKLEQQRILERLDIAPIDVFGLKMNISEIHDLNERLFNHIFEIIQNSDVYDDDIHRHHYVFEFDSTQILKDLHLIVDKINKTLEIFNGMTHKTIKTLRKQLLYINDTYRNIEQSLKDKHTAYLSIRNLTQKSTIKLIVKDYAVRDILTTRVLDKFNSLTFISGTLTFNHKFDAFKNWFKEDVHFNTYQVPSTLSNHANTNVYIPSDVSSYNFKNIDDYVASIVDYIQEYVTITDSKCLVLFTSYRMMHMVQELLNELPTFEDYVVLTQQQNQNYKIVQQFNNFDKTILLGTSTFFEGFDYQAKGIKCVMIAKLPFMNKYNTKHWLMDSEFDSTFKDYVLPDAVTRFRQGLGRLIRNEDDQGLIVSFDDRLVSSNYKNFFAQTLENYKQKKGDIKQFSKLVNKIQHNIDANK</sequence>
<dbReference type="EC" id="3.1.-.-" evidence="1"/>
<dbReference type="EMBL" id="AP006716">
    <property type="protein sequence ID" value="BAE04766.1"/>
    <property type="molecule type" value="Genomic_DNA"/>
</dbReference>
<dbReference type="RefSeq" id="WP_011275752.1">
    <property type="nucleotide sequence ID" value="NC_007168.1"/>
</dbReference>
<dbReference type="SMR" id="Q4L6F9"/>
<dbReference type="KEGG" id="sha:SH1457"/>
<dbReference type="eggNOG" id="COG0847">
    <property type="taxonomic scope" value="Bacteria"/>
</dbReference>
<dbReference type="eggNOG" id="COG1199">
    <property type="taxonomic scope" value="Bacteria"/>
</dbReference>
<dbReference type="HOGENOM" id="CLU_012117_1_1_9"/>
<dbReference type="OrthoDB" id="9803913at2"/>
<dbReference type="Proteomes" id="UP000000543">
    <property type="component" value="Chromosome"/>
</dbReference>
<dbReference type="GO" id="GO:0005829">
    <property type="term" value="C:cytosol"/>
    <property type="evidence" value="ECO:0007669"/>
    <property type="project" value="TreeGrafter"/>
</dbReference>
<dbReference type="GO" id="GO:0008408">
    <property type="term" value="F:3'-5' exonuclease activity"/>
    <property type="evidence" value="ECO:0007669"/>
    <property type="project" value="UniProtKB-UniRule"/>
</dbReference>
<dbReference type="GO" id="GO:0005524">
    <property type="term" value="F:ATP binding"/>
    <property type="evidence" value="ECO:0007669"/>
    <property type="project" value="UniProtKB-UniRule"/>
</dbReference>
<dbReference type="GO" id="GO:0003677">
    <property type="term" value="F:DNA binding"/>
    <property type="evidence" value="ECO:0007669"/>
    <property type="project" value="InterPro"/>
</dbReference>
<dbReference type="GO" id="GO:0003887">
    <property type="term" value="F:DNA-directed DNA polymerase activity"/>
    <property type="evidence" value="ECO:0007669"/>
    <property type="project" value="InterPro"/>
</dbReference>
<dbReference type="GO" id="GO:0004386">
    <property type="term" value="F:helicase activity"/>
    <property type="evidence" value="ECO:0007669"/>
    <property type="project" value="InterPro"/>
</dbReference>
<dbReference type="GO" id="GO:0016818">
    <property type="term" value="F:hydrolase activity, acting on acid anhydrides, in phosphorus-containing anhydrides"/>
    <property type="evidence" value="ECO:0007669"/>
    <property type="project" value="InterPro"/>
</dbReference>
<dbReference type="GO" id="GO:0045004">
    <property type="term" value="P:DNA replication proofreading"/>
    <property type="evidence" value="ECO:0007669"/>
    <property type="project" value="TreeGrafter"/>
</dbReference>
<dbReference type="CDD" id="cd06127">
    <property type="entry name" value="DEDDh"/>
    <property type="match status" value="1"/>
</dbReference>
<dbReference type="FunFam" id="3.30.420.10:FF:000045">
    <property type="entry name" value="3'-5' exonuclease DinG"/>
    <property type="match status" value="1"/>
</dbReference>
<dbReference type="Gene3D" id="3.40.50.300">
    <property type="entry name" value="P-loop containing nucleotide triphosphate hydrolases"/>
    <property type="match status" value="2"/>
</dbReference>
<dbReference type="Gene3D" id="3.30.420.10">
    <property type="entry name" value="Ribonuclease H-like superfamily/Ribonuclease H"/>
    <property type="match status" value="1"/>
</dbReference>
<dbReference type="HAMAP" id="MF_02206">
    <property type="entry name" value="DinG_exonucl"/>
    <property type="match status" value="1"/>
</dbReference>
<dbReference type="InterPro" id="IPR006555">
    <property type="entry name" value="ATP-dep_Helicase_C"/>
</dbReference>
<dbReference type="InterPro" id="IPR006310">
    <property type="entry name" value="DinG"/>
</dbReference>
<dbReference type="InterPro" id="IPR006054">
    <property type="entry name" value="DnaQ"/>
</dbReference>
<dbReference type="InterPro" id="IPR013520">
    <property type="entry name" value="Exonuclease_RNaseT/DNA_pol3"/>
</dbReference>
<dbReference type="InterPro" id="IPR014013">
    <property type="entry name" value="Helic_SF1/SF2_ATP-bd_DinG/Rad3"/>
</dbReference>
<dbReference type="InterPro" id="IPR006935">
    <property type="entry name" value="Helicase/UvrB_N"/>
</dbReference>
<dbReference type="InterPro" id="IPR027417">
    <property type="entry name" value="P-loop_NTPase"/>
</dbReference>
<dbReference type="InterPro" id="IPR012337">
    <property type="entry name" value="RNaseH-like_sf"/>
</dbReference>
<dbReference type="InterPro" id="IPR036397">
    <property type="entry name" value="RNaseH_sf"/>
</dbReference>
<dbReference type="NCBIfam" id="TIGR01407">
    <property type="entry name" value="dinG_rel"/>
    <property type="match status" value="1"/>
</dbReference>
<dbReference type="NCBIfam" id="TIGR00573">
    <property type="entry name" value="dnaq"/>
    <property type="match status" value="1"/>
</dbReference>
<dbReference type="PANTHER" id="PTHR30231">
    <property type="entry name" value="DNA POLYMERASE III SUBUNIT EPSILON"/>
    <property type="match status" value="1"/>
</dbReference>
<dbReference type="PANTHER" id="PTHR30231:SF41">
    <property type="entry name" value="DNA POLYMERASE III SUBUNIT EPSILON"/>
    <property type="match status" value="1"/>
</dbReference>
<dbReference type="Pfam" id="PF13307">
    <property type="entry name" value="Helicase_C_2"/>
    <property type="match status" value="1"/>
</dbReference>
<dbReference type="Pfam" id="PF04851">
    <property type="entry name" value="ResIII"/>
    <property type="match status" value="1"/>
</dbReference>
<dbReference type="Pfam" id="PF00929">
    <property type="entry name" value="RNase_T"/>
    <property type="match status" value="1"/>
</dbReference>
<dbReference type="SMART" id="SM00479">
    <property type="entry name" value="EXOIII"/>
    <property type="match status" value="1"/>
</dbReference>
<dbReference type="SMART" id="SM00491">
    <property type="entry name" value="HELICc2"/>
    <property type="match status" value="1"/>
</dbReference>
<dbReference type="SUPFAM" id="SSF52540">
    <property type="entry name" value="P-loop containing nucleoside triphosphate hydrolases"/>
    <property type="match status" value="1"/>
</dbReference>
<dbReference type="SUPFAM" id="SSF53098">
    <property type="entry name" value="Ribonuclease H-like"/>
    <property type="match status" value="1"/>
</dbReference>
<dbReference type="PROSITE" id="PS51193">
    <property type="entry name" value="HELICASE_ATP_BIND_2"/>
    <property type="match status" value="1"/>
</dbReference>
<dbReference type="PROSITE" id="PS51194">
    <property type="entry name" value="HELICASE_CTER"/>
    <property type="match status" value="1"/>
</dbReference>
<reference key="1">
    <citation type="journal article" date="2005" name="J. Bacteriol.">
        <title>Whole-genome sequencing of Staphylococcus haemolyticus uncovers the extreme plasticity of its genome and the evolution of human-colonizing staphylococcal species.</title>
        <authorList>
            <person name="Takeuchi F."/>
            <person name="Watanabe S."/>
            <person name="Baba T."/>
            <person name="Yuzawa H."/>
            <person name="Ito T."/>
            <person name="Morimoto Y."/>
            <person name="Kuroda M."/>
            <person name="Cui L."/>
            <person name="Takahashi M."/>
            <person name="Ankai A."/>
            <person name="Baba S."/>
            <person name="Fukui S."/>
            <person name="Lee J.C."/>
            <person name="Hiramatsu K."/>
        </authorList>
    </citation>
    <scope>NUCLEOTIDE SEQUENCE [LARGE SCALE GENOMIC DNA]</scope>
    <source>
        <strain>JCSC1435</strain>
    </source>
</reference>
<organism>
    <name type="scientific">Staphylococcus haemolyticus (strain JCSC1435)</name>
    <dbReference type="NCBI Taxonomy" id="279808"/>
    <lineage>
        <taxon>Bacteria</taxon>
        <taxon>Bacillati</taxon>
        <taxon>Bacillota</taxon>
        <taxon>Bacilli</taxon>
        <taxon>Bacillales</taxon>
        <taxon>Staphylococcaceae</taxon>
        <taxon>Staphylococcus</taxon>
    </lineage>
</organism>
<accession>Q4L6F9</accession>
<comment type="function">
    <text evidence="1">3'-5' exonuclease.</text>
</comment>
<comment type="similarity">
    <text evidence="1">Belongs to the helicase family. DinG subfamily. Type 2 sub-subfamily.</text>
</comment>